<accession>O15529</accession>
<keyword id="KW-1003">Cell membrane</keyword>
<keyword id="KW-0297">G-protein coupled receptor</keyword>
<keyword id="KW-0325">Glycoprotein</keyword>
<keyword id="KW-0472">Membrane</keyword>
<keyword id="KW-0675">Receptor</keyword>
<keyword id="KW-1185">Reference proteome</keyword>
<keyword id="KW-0807">Transducer</keyword>
<keyword id="KW-0812">Transmembrane</keyword>
<keyword id="KW-1133">Transmembrane helix</keyword>
<organism>
    <name type="scientific">Homo sapiens</name>
    <name type="common">Human</name>
    <dbReference type="NCBI Taxonomy" id="9606"/>
    <lineage>
        <taxon>Eukaryota</taxon>
        <taxon>Metazoa</taxon>
        <taxon>Chordata</taxon>
        <taxon>Craniata</taxon>
        <taxon>Vertebrata</taxon>
        <taxon>Euteleostomi</taxon>
        <taxon>Mammalia</taxon>
        <taxon>Eutheria</taxon>
        <taxon>Euarchontoglires</taxon>
        <taxon>Primates</taxon>
        <taxon>Haplorrhini</taxon>
        <taxon>Catarrhini</taxon>
        <taxon>Hominidae</taxon>
        <taxon>Homo</taxon>
    </lineage>
</organism>
<name>GPR42_HUMAN</name>
<gene>
    <name type="primary">GPR42</name>
    <name type="synonym">GPR42P</name>
</gene>
<sequence>MDTGPDQSYFSGNHWFVFSVYLLTFLVGLPLNLLALVVFVGKLRCRPVAVDVLLLNLTASDLLLLLFLPFRMVEAANGMHWPLPFILCPLSGFIFFTTIYLTALFLAAVSIERFLSVAHPLWYKTRPRLGQAGLVSVACWLLASAHCSVVYVIEFSGDISHSQGTNGTCYLEFRKDQLAILLPVRLEMAVVLFVVPLIITSYCYSRLVWILGRGGSHRRQRRVAGLVAATLLNFLVCFGPYNVSHVVGYICGESPVWRIYVTLLSTLNSCVDPFVYYFSSSGFQADFHELLRRLCGLWGQWQQESSMELKEQKGGEEQRADRPAERKTSEHSQGCGTGGQVACAEN</sequence>
<feature type="chain" id="PRO_0000069570" description="G-protein coupled receptor 42">
    <location>
        <begin position="1"/>
        <end position="346"/>
    </location>
</feature>
<feature type="topological domain" description="Extracellular" evidence="2">
    <location>
        <begin position="1"/>
        <end position="19"/>
    </location>
</feature>
<feature type="transmembrane region" description="Helical; Name=1" evidence="2">
    <location>
        <begin position="20"/>
        <end position="40"/>
    </location>
</feature>
<feature type="topological domain" description="Cytoplasmic">
    <location>
        <begin position="41"/>
        <end position="47"/>
    </location>
</feature>
<feature type="transmembrane region" description="Helical; Name=2" evidence="2">
    <location>
        <begin position="48"/>
        <end position="68"/>
    </location>
</feature>
<feature type="topological domain" description="Extracellular" evidence="2">
    <location>
        <begin position="69"/>
        <end position="90"/>
    </location>
</feature>
<feature type="transmembrane region" description="Helical; Name=3" evidence="2">
    <location>
        <begin position="91"/>
        <end position="111"/>
    </location>
</feature>
<feature type="topological domain" description="Cytoplasmic" evidence="2">
    <location>
        <begin position="112"/>
        <end position="132"/>
    </location>
</feature>
<feature type="transmembrane region" description="Helical; Name=4" evidence="2">
    <location>
        <begin position="133"/>
        <end position="153"/>
    </location>
</feature>
<feature type="topological domain" description="Extracellular" evidence="2">
    <location>
        <begin position="154"/>
        <end position="178"/>
    </location>
</feature>
<feature type="transmembrane region" description="Helical; Name=5" evidence="2">
    <location>
        <begin position="179"/>
        <end position="199"/>
    </location>
</feature>
<feature type="topological domain" description="Cytoplasmic" evidence="2">
    <location>
        <begin position="200"/>
        <end position="222"/>
    </location>
</feature>
<feature type="transmembrane region" description="Helical; Name=6" evidence="2">
    <location>
        <begin position="223"/>
        <end position="243"/>
    </location>
</feature>
<feature type="topological domain" description="Extracellular" evidence="2">
    <location>
        <begin position="244"/>
        <end position="258"/>
    </location>
</feature>
<feature type="transmembrane region" description="Helical; Name=7" evidence="2">
    <location>
        <begin position="259"/>
        <end position="279"/>
    </location>
</feature>
<feature type="topological domain" description="Cytoplasmic" evidence="2">
    <location>
        <begin position="280"/>
        <end position="346"/>
    </location>
</feature>
<feature type="region of interest" description="Disordered" evidence="4">
    <location>
        <begin position="307"/>
        <end position="346"/>
    </location>
</feature>
<feature type="compositionally biased region" description="Basic and acidic residues" evidence="4">
    <location>
        <begin position="307"/>
        <end position="330"/>
    </location>
</feature>
<feature type="glycosylation site" description="N-linked (GlcNAc...) asparagine" evidence="2">
    <location>
        <position position="166"/>
    </location>
</feature>
<feature type="sequence variant" id="VAR_062860" description="In dbSNP:rs878906072." evidence="7">
    <original>R</original>
    <variation>Q</variation>
    <location>
        <position position="44"/>
    </location>
</feature>
<feature type="sequence variant" id="VAR_033468" description="In dbSNP:rs423385." evidence="7">
    <original>C</original>
    <variation>R</variation>
    <location>
        <position position="45"/>
    </location>
</feature>
<feature type="sequence variant" id="VAR_088067" description="Loss of response to propionate; dbSNP:rs424241." evidence="5 6 7">
    <original>R</original>
    <variation>W</variation>
    <location>
        <position position="174"/>
    </location>
</feature>
<feature type="sequence variant" id="VAR_033469" description="In dbSNP:rs403989." evidence="7">
    <original>V</original>
    <variation>L</variation>
    <location>
        <position position="227"/>
    </location>
</feature>
<feature type="sequence variant" id="VAR_033470" description="In dbSNP:rs424715." evidence="7">
    <original>V</original>
    <variation>A</variation>
    <location>
        <position position="256"/>
    </location>
</feature>
<feature type="sequence variant" id="VAR_062862" description="In dbSNP:rs381478." evidence="7">
    <original>N</original>
    <variation>S</variation>
    <location>
        <position position="346"/>
    </location>
</feature>
<proteinExistence type="evidence at protein level"/>
<evidence type="ECO:0000250" key="1"/>
<evidence type="ECO:0000255" key="2"/>
<evidence type="ECO:0000255" key="3">
    <source>
        <dbReference type="PROSITE-ProRule" id="PRU00521"/>
    </source>
</evidence>
<evidence type="ECO:0000256" key="4">
    <source>
        <dbReference type="SAM" id="MobiDB-lite"/>
    </source>
</evidence>
<evidence type="ECO:0000269" key="5">
    <source>
    </source>
</evidence>
<evidence type="ECO:0000269" key="6">
    <source>
    </source>
</evidence>
<evidence type="ECO:0000269" key="7">
    <source>
    </source>
</evidence>
<evidence type="ECO:0000305" key="8"/>
<protein>
    <recommendedName>
        <fullName>G-protein coupled receptor 42</fullName>
    </recommendedName>
</protein>
<dbReference type="EMBL" id="AF024689">
    <property type="protein sequence ID" value="AAB86712.1"/>
    <property type="molecule type" value="Genomic_DNA"/>
</dbReference>
<dbReference type="EMBL" id="AC002511">
    <property type="protein sequence ID" value="AAB67885.1"/>
    <property type="molecule type" value="Genomic_DNA"/>
</dbReference>
<dbReference type="CCDS" id="CCDS12460.1"/>
<dbReference type="PIR" id="JC5716">
    <property type="entry name" value="JC5716"/>
</dbReference>
<dbReference type="RefSeq" id="NP_001335124.1">
    <property type="nucleotide sequence ID" value="NM_001348195.1"/>
</dbReference>
<dbReference type="SMR" id="O15529"/>
<dbReference type="FunCoup" id="O15529">
    <property type="interactions" value="240"/>
</dbReference>
<dbReference type="IntAct" id="O15529">
    <property type="interactions" value="101"/>
</dbReference>
<dbReference type="STRING" id="9606.ENSP00000473212"/>
<dbReference type="GlyCosmos" id="O15529">
    <property type="glycosylation" value="1 site, No reported glycans"/>
</dbReference>
<dbReference type="GlyGen" id="O15529">
    <property type="glycosylation" value="1 site"/>
</dbReference>
<dbReference type="BioMuta" id="GPR42"/>
<dbReference type="PaxDb" id="9606-ENSP00000473212"/>
<dbReference type="Antibodypedia" id="71522">
    <property type="antibodies" value="11 antibodies from 9 providers"/>
</dbReference>
<dbReference type="DNASU" id="2866"/>
<dbReference type="Ensembl" id="ENST00000454971.3">
    <property type="protein sequence ID" value="ENSP00000410925.1"/>
    <property type="gene ID" value="ENSG00000126251.7"/>
</dbReference>
<dbReference type="Ensembl" id="ENST00000597214.1">
    <property type="protein sequence ID" value="ENSP00000473212.1"/>
    <property type="gene ID" value="ENSG00000126251.7"/>
</dbReference>
<dbReference type="GeneID" id="2866"/>
<dbReference type="KEGG" id="hsa:2866"/>
<dbReference type="MANE-Select" id="ENST00000454971.3">
    <property type="protein sequence ID" value="ENSP00000410925.1"/>
    <property type="RefSeq nucleotide sequence ID" value="NM_001348195.2"/>
    <property type="RefSeq protein sequence ID" value="NP_001335124.1"/>
</dbReference>
<dbReference type="UCSC" id="uc021usn.2">
    <property type="organism name" value="human"/>
</dbReference>
<dbReference type="AGR" id="HGNC:4500"/>
<dbReference type="CTD" id="2866"/>
<dbReference type="DisGeNET" id="2866"/>
<dbReference type="GeneCards" id="GPR42"/>
<dbReference type="HGNC" id="HGNC:4500">
    <property type="gene designation" value="GPR42"/>
</dbReference>
<dbReference type="HPA" id="ENSG00000126251">
    <property type="expression patterns" value="Not detected"/>
</dbReference>
<dbReference type="MIM" id="603822">
    <property type="type" value="gene"/>
</dbReference>
<dbReference type="neXtProt" id="NX_O15529"/>
<dbReference type="VEuPathDB" id="HostDB:ENSG00000126251"/>
<dbReference type="eggNOG" id="ENOG502QQGM">
    <property type="taxonomic scope" value="Eukaryota"/>
</dbReference>
<dbReference type="HOGENOM" id="CLU_009579_8_4_1"/>
<dbReference type="InParanoid" id="O15529"/>
<dbReference type="OrthoDB" id="5961208at2759"/>
<dbReference type="PAN-GO" id="O15529">
    <property type="GO annotations" value="1 GO annotation based on evolutionary models"/>
</dbReference>
<dbReference type="PhylomeDB" id="O15529"/>
<dbReference type="TreeFam" id="TF350010"/>
<dbReference type="PathwayCommons" id="O15529"/>
<dbReference type="SignaLink" id="O15529"/>
<dbReference type="BioGRID-ORCS" id="2866">
    <property type="hits" value="0 hits in 43 CRISPR screens"/>
</dbReference>
<dbReference type="GenomeRNAi" id="2866"/>
<dbReference type="Pharos" id="O15529">
    <property type="development level" value="Tdark"/>
</dbReference>
<dbReference type="PRO" id="PR:O15529"/>
<dbReference type="Proteomes" id="UP000005640">
    <property type="component" value="Chromosome 19"/>
</dbReference>
<dbReference type="RNAct" id="O15529">
    <property type="molecule type" value="protein"/>
</dbReference>
<dbReference type="Bgee" id="ENSG00000126251">
    <property type="expression patterns" value="Expressed in blood and 34 other cell types or tissues"/>
</dbReference>
<dbReference type="ExpressionAtlas" id="O15529">
    <property type="expression patterns" value="baseline and differential"/>
</dbReference>
<dbReference type="GO" id="GO:0005886">
    <property type="term" value="C:plasma membrane"/>
    <property type="evidence" value="ECO:0000318"/>
    <property type="project" value="GO_Central"/>
</dbReference>
<dbReference type="GO" id="GO:0004930">
    <property type="term" value="F:G protein-coupled receptor activity"/>
    <property type="evidence" value="ECO:0000303"/>
    <property type="project" value="UniProtKB"/>
</dbReference>
<dbReference type="GO" id="GO:0007186">
    <property type="term" value="P:G protein-coupled receptor signaling pathway"/>
    <property type="evidence" value="ECO:0000303"/>
    <property type="project" value="UniProtKB"/>
</dbReference>
<dbReference type="CDD" id="cd15170">
    <property type="entry name" value="7tmA_FFAR2_FFAR3"/>
    <property type="match status" value="1"/>
</dbReference>
<dbReference type="FunFam" id="1.20.1070.10:FF:000173">
    <property type="entry name" value="Free fatty acid receptor 1"/>
    <property type="match status" value="1"/>
</dbReference>
<dbReference type="Gene3D" id="1.20.1070.10">
    <property type="entry name" value="Rhodopsin 7-helix transmembrane proteins"/>
    <property type="match status" value="1"/>
</dbReference>
<dbReference type="InterPro" id="IPR000276">
    <property type="entry name" value="GPCR_Rhodpsn"/>
</dbReference>
<dbReference type="InterPro" id="IPR017452">
    <property type="entry name" value="GPCR_Rhodpsn_7TM"/>
</dbReference>
<dbReference type="InterPro" id="IPR013312">
    <property type="entry name" value="GPR40-rel_orph"/>
</dbReference>
<dbReference type="PANTHER" id="PTHR45822">
    <property type="entry name" value="FREE FATTY ACID RECEPTOR 2-RELATED"/>
    <property type="match status" value="1"/>
</dbReference>
<dbReference type="PANTHER" id="PTHR45822:SF6">
    <property type="entry name" value="FREE FATTY ACID RECEPTOR 3-RELATED"/>
    <property type="match status" value="1"/>
</dbReference>
<dbReference type="Pfam" id="PF00001">
    <property type="entry name" value="7tm_1"/>
    <property type="match status" value="1"/>
</dbReference>
<dbReference type="PRINTS" id="PR00237">
    <property type="entry name" value="GPCRRHODOPSN"/>
</dbReference>
<dbReference type="PRINTS" id="PR01904">
    <property type="entry name" value="GPR40FAMILY"/>
</dbReference>
<dbReference type="SUPFAM" id="SSF81321">
    <property type="entry name" value="Family A G protein-coupled receptor-like"/>
    <property type="match status" value="1"/>
</dbReference>
<dbReference type="PROSITE" id="PS00237">
    <property type="entry name" value="G_PROTEIN_RECEP_F1_1"/>
    <property type="match status" value="1"/>
</dbReference>
<dbReference type="PROSITE" id="PS50262">
    <property type="entry name" value="G_PROTEIN_RECEP_F1_2"/>
    <property type="match status" value="1"/>
</dbReference>
<comment type="function">
    <text evidence="7">G protein-coupled receptor that is activated by short chain fatty acids (SCFAs), such as propionate. Hence may play a role in the regulation of whole-body energy homeostasis and/or in intestinal immunity.</text>
</comment>
<comment type="interaction">
    <interactant intactId="EBI-18076404">
        <id>O15529</id>
    </interactant>
    <interactant intactId="EBI-10827839">
        <id>Q15848</id>
        <label>ADIPOQ</label>
    </interactant>
    <organismsDiffer>false</organismsDiffer>
    <experiments>3</experiments>
</comment>
<comment type="interaction">
    <interactant intactId="EBI-18076404">
        <id>O15529</id>
    </interactant>
    <interactant intactId="EBI-3904621">
        <id>P20292</id>
        <label>ALOX5AP</label>
    </interactant>
    <organismsDiffer>false</organismsDiffer>
    <experiments>3</experiments>
</comment>
<comment type="interaction">
    <interactant intactId="EBI-18076404">
        <id>O15529</id>
    </interactant>
    <interactant intactId="EBI-12109402">
        <id>Q86W74-2</id>
        <label>ANKRD46</label>
    </interactant>
    <organismsDiffer>false</organismsDiffer>
    <experiments>3</experiments>
</comment>
<comment type="interaction">
    <interactant intactId="EBI-18076404">
        <id>O15529</id>
    </interactant>
    <interactant intactId="EBI-715495">
        <id>P05090</id>
        <label>APOD</label>
    </interactant>
    <organismsDiffer>false</organismsDiffer>
    <experiments>3</experiments>
</comment>
<comment type="interaction">
    <interactant intactId="EBI-18076404">
        <id>O15529</id>
    </interactant>
    <interactant intactId="EBI-12069500">
        <id>Q9HD20-3</id>
        <label>ATP13A1</label>
    </interactant>
    <organismsDiffer>false</organismsDiffer>
    <experiments>3</experiments>
</comment>
<comment type="interaction">
    <interactant intactId="EBI-18076404">
        <id>O15529</id>
    </interactant>
    <interactant intactId="EBI-3904463">
        <id>P51164</id>
        <label>ATP4B</label>
    </interactant>
    <organismsDiffer>false</organismsDiffer>
    <experiments>3</experiments>
</comment>
<comment type="interaction">
    <interactant intactId="EBI-18076404">
        <id>O15529</id>
    </interactant>
    <interactant intactId="EBI-3904417">
        <id>Q99437</id>
        <label>ATP6V0B</label>
    </interactant>
    <organismsDiffer>false</organismsDiffer>
    <experiments>3</experiments>
</comment>
<comment type="interaction">
    <interactant intactId="EBI-18076404">
        <id>O15529</id>
    </interactant>
    <interactant intactId="EBI-721179">
        <id>P27449</id>
        <label>ATP6V0C</label>
    </interactant>
    <organismsDiffer>false</organismsDiffer>
    <experiments>3</experiments>
</comment>
<comment type="interaction">
    <interactant intactId="EBI-18076404">
        <id>O15529</id>
    </interactant>
    <interactant intactId="EBI-749464">
        <id>Q12983</id>
        <label>BNIP3</label>
    </interactant>
    <organismsDiffer>false</organismsDiffer>
    <experiments>3</experiments>
</comment>
<comment type="interaction">
    <interactant intactId="EBI-18076404">
        <id>O15529</id>
    </interactant>
    <interactant intactId="EBI-8648738">
        <id>Q8WVV5</id>
        <label>BTN2A2</label>
    </interactant>
    <organismsDiffer>false</organismsDiffer>
    <experiments>3</experiments>
</comment>
<comment type="interaction">
    <interactant intactId="EBI-18076404">
        <id>O15529</id>
    </interactant>
    <interactant intactId="EBI-9083477">
        <id>Q9P0B6</id>
        <label>CCDC167</label>
    </interactant>
    <organismsDiffer>false</organismsDiffer>
    <experiments>3</experiments>
</comment>
<comment type="interaction">
    <interactant intactId="EBI-18076404">
        <id>O15529</id>
    </interactant>
    <interactant intactId="EBI-10271156">
        <id>Q8NHW4</id>
        <label>CCL4L2</label>
    </interactant>
    <organismsDiffer>false</organismsDiffer>
    <experiments>3</experiments>
</comment>
<comment type="interaction">
    <interactant intactId="EBI-18076404">
        <id>O15529</id>
    </interactant>
    <interactant intactId="EBI-3915344">
        <id>Q08708</id>
        <label>CD300C</label>
    </interactant>
    <organismsDiffer>false</organismsDiffer>
    <experiments>3</experiments>
</comment>
<comment type="interaction">
    <interactant intactId="EBI-18076404">
        <id>O15529</id>
    </interactant>
    <interactant intactId="EBI-7797864">
        <id>P11912</id>
        <label>CD79A</label>
    </interactant>
    <organismsDiffer>false</organismsDiffer>
    <experiments>3</experiments>
</comment>
<comment type="interaction">
    <interactant intactId="EBI-18076404">
        <id>O15529</id>
    </interactant>
    <interactant intactId="EBI-11749983">
        <id>Q9UHP7-3</id>
        <label>CLEC2D</label>
    </interactant>
    <organismsDiffer>false</organismsDiffer>
    <experiments>3</experiments>
</comment>
<comment type="interaction">
    <interactant intactId="EBI-18076404">
        <id>O15529</id>
    </interactant>
    <interactant intactId="EBI-372265">
        <id>P21964</id>
        <label>COMT</label>
    </interactant>
    <organismsDiffer>false</organismsDiffer>
    <experiments>3</experiments>
</comment>
<comment type="interaction">
    <interactant intactId="EBI-18076404">
        <id>O15529</id>
    </interactant>
    <interactant intactId="EBI-12019274">
        <id>Q4LDR2</id>
        <label>CTXN3</label>
    </interactant>
    <organismsDiffer>false</organismsDiffer>
    <experiments>3</experiments>
</comment>
<comment type="interaction">
    <interactant intactId="EBI-18076404">
        <id>O15529</id>
    </interactant>
    <interactant intactId="EBI-3911467">
        <id>Q07325</id>
        <label>CXCL9</label>
    </interactant>
    <organismsDiffer>false</organismsDiffer>
    <experiments>3</experiments>
</comment>
<comment type="interaction">
    <interactant intactId="EBI-18076404">
        <id>O15529</id>
    </interactant>
    <interactant intactId="EBI-10305400">
        <id>Q8N682</id>
        <label>DRAM1</label>
    </interactant>
    <organismsDiffer>false</organismsDiffer>
    <experiments>3</experiments>
</comment>
<comment type="interaction">
    <interactant intactId="EBI-18076404">
        <id>O15529</id>
    </interactant>
    <interactant intactId="EBI-1753674">
        <id>P52803</id>
        <label>EFNA5</label>
    </interactant>
    <organismsDiffer>false</organismsDiffer>
    <experiments>3</experiments>
</comment>
<comment type="interaction">
    <interactant intactId="EBI-18076404">
        <id>O15529</id>
    </interactant>
    <interactant intactId="EBI-4319440">
        <id>P54849</id>
        <label>EMP1</label>
    </interactant>
    <organismsDiffer>false</organismsDiffer>
    <experiments>3</experiments>
</comment>
<comment type="interaction">
    <interactant intactId="EBI-18076404">
        <id>O15529</id>
    </interactant>
    <interactant intactId="EBI-10976398">
        <id>Q7Z2K6</id>
        <label>ERMP1</label>
    </interactant>
    <organismsDiffer>false</organismsDiffer>
    <experiments>3</experiments>
</comment>
<comment type="interaction">
    <interactant intactId="EBI-18076404">
        <id>O15529</id>
    </interactant>
    <interactant intactId="EBI-2876774">
        <id>Q92520</id>
        <label>FAM3C</label>
    </interactant>
    <organismsDiffer>false</organismsDiffer>
    <experiments>3</experiments>
</comment>
<comment type="interaction">
    <interactant intactId="EBI-18076404">
        <id>O15529</id>
    </interactant>
    <interactant intactId="EBI-12175685">
        <id>Q14802-3</id>
        <label>FXYD3</label>
    </interactant>
    <organismsDiffer>false</organismsDiffer>
    <experiments>3</experiments>
</comment>
<comment type="interaction">
    <interactant intactId="EBI-18076404">
        <id>O15529</id>
    </interactant>
    <interactant intactId="EBI-713304">
        <id>Q9H0Q3</id>
        <label>FXYD6</label>
    </interactant>
    <organismsDiffer>false</organismsDiffer>
    <experiments>3</experiments>
</comment>
<comment type="interaction">
    <interactant intactId="EBI-18076404">
        <id>O15529</id>
    </interactant>
    <interactant intactId="EBI-3905204">
        <id>P29033</id>
        <label>GJB2</label>
    </interactant>
    <organismsDiffer>false</organismsDiffer>
    <experiments>3</experiments>
</comment>
<comment type="interaction">
    <interactant intactId="EBI-18076404">
        <id>O15529</id>
    </interactant>
    <interactant intactId="EBI-4401517">
        <id>O14653</id>
        <label>GOSR2</label>
    </interactant>
    <organismsDiffer>false</organismsDiffer>
    <experiments>3</experiments>
</comment>
<comment type="interaction">
    <interactant intactId="EBI-18076404">
        <id>O15529</id>
    </interactant>
    <interactant intactId="EBI-2927498">
        <id>O60883</id>
        <label>GPR37L1</label>
    </interactant>
    <organismsDiffer>false</organismsDiffer>
    <experiments>3</experiments>
</comment>
<comment type="interaction">
    <interactant intactId="EBI-18076404">
        <id>O15529</id>
    </interactant>
    <interactant intactId="EBI-7797098">
        <id>P04921</id>
        <label>GYPC</label>
    </interactant>
    <organismsDiffer>false</organismsDiffer>
    <experiments>3</experiments>
</comment>
<comment type="interaction">
    <interactant intactId="EBI-18076404">
        <id>O15529</id>
    </interactant>
    <interactant intactId="EBI-725665">
        <id>Q9Y5U9</id>
        <label>IER3IP1</label>
    </interactant>
    <organismsDiffer>false</organismsDiffer>
    <experiments>3</experiments>
</comment>
<comment type="interaction">
    <interactant intactId="EBI-18076404">
        <id>O15529</id>
    </interactant>
    <interactant intactId="EBI-720480">
        <id>P24593</id>
        <label>IGFBP5</label>
    </interactant>
    <organismsDiffer>false</organismsDiffer>
    <experiments>3</experiments>
</comment>
<comment type="interaction">
    <interactant intactId="EBI-18076404">
        <id>O15529</id>
    </interactant>
    <interactant intactId="EBI-12838366">
        <id>Q01638-2</id>
        <label>IL1RL1</label>
    </interactant>
    <organismsDiffer>false</organismsDiffer>
    <experiments>3</experiments>
</comment>
<comment type="interaction">
    <interactant intactId="EBI-18076404">
        <id>O15529</id>
    </interactant>
    <interactant intactId="EBI-2568251">
        <id>P11215</id>
        <label>ITGAM</label>
    </interactant>
    <organismsDiffer>false</organismsDiffer>
    <experiments>3</experiments>
</comment>
<comment type="interaction">
    <interactant intactId="EBI-18076404">
        <id>O15529</id>
    </interactant>
    <interactant intactId="EBI-465137">
        <id>Q9HDC5</id>
        <label>JPH1</label>
    </interactant>
    <organismsDiffer>false</organismsDiffer>
    <experiments>3</experiments>
</comment>
<comment type="interaction">
    <interactant intactId="EBI-18076404">
        <id>O15529</id>
    </interactant>
    <interactant intactId="EBI-8286599">
        <id>Q09470</id>
        <label>KCNA1</label>
    </interactant>
    <organismsDiffer>false</organismsDiffer>
    <experiments>3</experiments>
</comment>
<comment type="interaction">
    <interactant intactId="EBI-18076404">
        <id>O15529</id>
    </interactant>
    <interactant intactId="EBI-750770">
        <id>Q96E93</id>
        <label>KLRG1</label>
    </interactant>
    <organismsDiffer>false</organismsDiffer>
    <experiments>3</experiments>
</comment>
<comment type="interaction">
    <interactant intactId="EBI-18076404">
        <id>O15529</id>
    </interactant>
    <interactant intactId="EBI-8070286">
        <id>O43561-2</id>
        <label>LAT</label>
    </interactant>
    <organismsDiffer>false</organismsDiffer>
    <experiments>3</experiments>
</comment>
<comment type="interaction">
    <interactant intactId="EBI-18076404">
        <id>O15529</id>
    </interactant>
    <interactant intactId="EBI-750776">
        <id>O95214</id>
        <label>LEPROTL1</label>
    </interactant>
    <organismsDiffer>false</organismsDiffer>
    <experiments>3</experiments>
</comment>
<comment type="interaction">
    <interactant intactId="EBI-18076404">
        <id>O15529</id>
    </interactant>
    <interactant intactId="EBI-2820517">
        <id>Q8TAF8</id>
        <label>LHFPL5</label>
    </interactant>
    <organismsDiffer>false</organismsDiffer>
    <experiments>3</experiments>
</comment>
<comment type="interaction">
    <interactant intactId="EBI-18076404">
        <id>O15529</id>
    </interactant>
    <interactant intactId="EBI-12133176">
        <id>Q9UIQ6-2</id>
        <label>LNPEP</label>
    </interactant>
    <organismsDiffer>false</organismsDiffer>
    <experiments>3</experiments>
</comment>
<comment type="interaction">
    <interactant intactId="EBI-18076404">
        <id>O15529</id>
    </interactant>
    <interactant intactId="EBI-12241118">
        <id>Q16873</id>
        <label>LTC4S</label>
    </interactant>
    <organismsDiffer>false</organismsDiffer>
    <experiments>3</experiments>
</comment>
<comment type="interaction">
    <interactant intactId="EBI-18076404">
        <id>O15529</id>
    </interactant>
    <interactant intactId="EBI-3920969">
        <id>Q6N075</id>
        <label>MFSD5</label>
    </interactant>
    <organismsDiffer>false</organismsDiffer>
    <experiments>3</experiments>
</comment>
<comment type="interaction">
    <interactant intactId="EBI-18076404">
        <id>O15529</id>
    </interactant>
    <interactant intactId="EBI-2858252">
        <id>Q6ZSS7</id>
        <label>MFSD6</label>
    </interactant>
    <organismsDiffer>false</organismsDiffer>
    <experiments>3</experiments>
</comment>
<comment type="interaction">
    <interactant intactId="EBI-18076404">
        <id>O15529</id>
    </interactant>
    <interactant intactId="EBI-2829774">
        <id>O43451</id>
        <label>MGAM</label>
    </interactant>
    <organismsDiffer>false</organismsDiffer>
    <experiments>3</experiments>
</comment>
<comment type="interaction">
    <interactant intactId="EBI-18076404">
        <id>O15529</id>
    </interactant>
    <interactant intactId="EBI-2808234">
        <id>P11836</id>
        <label>MS4A1</label>
    </interactant>
    <organismsDiffer>false</organismsDiffer>
    <experiments>3</experiments>
</comment>
<comment type="interaction">
    <interactant intactId="EBI-18076404">
        <id>O15529</id>
    </interactant>
    <interactant intactId="EBI-1246182">
        <id>Q9NX14</id>
        <label>NDUFB11</label>
    </interactant>
    <organismsDiffer>false</organismsDiffer>
    <experiments>3</experiments>
</comment>
<comment type="interaction">
    <interactant intactId="EBI-18076404">
        <id>O15529</id>
    </interactant>
    <interactant intactId="EBI-10317425">
        <id>Q9NZG7</id>
        <label>NINJ2</label>
    </interactant>
    <organismsDiffer>false</organismsDiffer>
    <experiments>3</experiments>
</comment>
<comment type="interaction">
    <interactant intactId="EBI-18076404">
        <id>O15529</id>
    </interactant>
    <interactant intactId="EBI-10262547">
        <id>Q8IXM6</id>
        <label>NRM</label>
    </interactant>
    <organismsDiffer>false</organismsDiffer>
    <experiments>3</experiments>
</comment>
<comment type="interaction">
    <interactant intactId="EBI-18076404">
        <id>O15529</id>
    </interactant>
    <interactant intactId="EBI-6380741">
        <id>P42857</id>
        <label>NSG1</label>
    </interactant>
    <organismsDiffer>false</organismsDiffer>
    <experiments>3</experiments>
</comment>
<comment type="interaction">
    <interactant intactId="EBI-18076404">
        <id>O15529</id>
    </interactant>
    <interactant intactId="EBI-465167">
        <id>P09466</id>
        <label>PAEP</label>
    </interactant>
    <organismsDiffer>false</organismsDiffer>
    <experiments>3</experiments>
</comment>
<comment type="interaction">
    <interactant intactId="EBI-18076404">
        <id>O15529</id>
    </interactant>
    <interactant intactId="EBI-12188331">
        <id>P60201-2</id>
        <label>PLP1</label>
    </interactant>
    <organismsDiffer>false</organismsDiffer>
    <experiments>3</experiments>
</comment>
<comment type="interaction">
    <interactant intactId="EBI-18076404">
        <id>O15529</id>
    </interactant>
    <interactant intactId="EBI-2865290">
        <id>O14494</id>
        <label>PLPP1</label>
    </interactant>
    <organismsDiffer>false</organismsDiffer>
    <experiments>3</experiments>
</comment>
<comment type="interaction">
    <interactant intactId="EBI-18076404">
        <id>O15529</id>
    </interactant>
    <interactant intactId="EBI-2845982">
        <id>Q01453</id>
        <label>PMP22</label>
    </interactant>
    <organismsDiffer>false</organismsDiffer>
    <experiments>3</experiments>
</comment>
<comment type="interaction">
    <interactant intactId="EBI-18076404">
        <id>O15529</id>
    </interactant>
    <interactant intactId="EBI-8652812">
        <id>P54315</id>
        <label>PNLIPRP1</label>
    </interactant>
    <organismsDiffer>false</organismsDiffer>
    <experiments>3</experiments>
</comment>
<comment type="interaction">
    <interactant intactId="EBI-18076404">
        <id>O15529</id>
    </interactant>
    <interactant intactId="EBI-1052363">
        <id>Q9NS64</id>
        <label>RPRM</label>
    </interactant>
    <organismsDiffer>false</organismsDiffer>
    <experiments>3</experiments>
</comment>
<comment type="interaction">
    <interactant intactId="EBI-18076404">
        <id>O15529</id>
    </interactant>
    <interactant intactId="EBI-10244780">
        <id>Q5QGT7</id>
        <label>RTP2</label>
    </interactant>
    <organismsDiffer>false</organismsDiffer>
    <experiments>3</experiments>
</comment>
<comment type="interaction">
    <interactant intactId="EBI-18076404">
        <id>O15529</id>
    </interactant>
    <interactant intactId="EBI-8636004">
        <id>Q96GQ5</id>
        <label>RUSF1</label>
    </interactant>
    <organismsDiffer>false</organismsDiffer>
    <experiments>3</experiments>
</comment>
<comment type="interaction">
    <interactant intactId="EBI-18076404">
        <id>O15529</id>
    </interactant>
    <interactant intactId="EBI-2684237">
        <id>O00767</id>
        <label>SCD</label>
    </interactant>
    <organismsDiffer>false</organismsDiffer>
    <experiments>3</experiments>
</comment>
<comment type="interaction">
    <interactant intactId="EBI-18076404">
        <id>O15529</id>
    </interactant>
    <interactant intactId="EBI-2683145">
        <id>Q9NRX5</id>
        <label>SERINC1</label>
    </interactant>
    <organismsDiffer>false</organismsDiffer>
    <experiments>3</experiments>
</comment>
<comment type="interaction">
    <interactant intactId="EBI-18076404">
        <id>O15529</id>
    </interactant>
    <interactant intactId="EBI-749270">
        <id>Q8N6R1</id>
        <label>SERP2</label>
    </interactant>
    <organismsDiffer>false</organismsDiffer>
    <experiments>3</experiments>
</comment>
<comment type="interaction">
    <interactant intactId="EBI-18076404">
        <id>O15529</id>
    </interactant>
    <interactant intactId="EBI-17284533">
        <id>A2A2V5</id>
        <label>SERTM1</label>
    </interactant>
    <organismsDiffer>false</organismsDiffer>
    <experiments>3</experiments>
</comment>
<comment type="interaction">
    <interactant intactId="EBI-18076404">
        <id>O15529</id>
    </interactant>
    <interactant intactId="EBI-8644112">
        <id>Q9BRI3</id>
        <label>SLC30A2</label>
    </interactant>
    <organismsDiffer>false</organismsDiffer>
    <experiments>3</experiments>
</comment>
<comment type="interaction">
    <interactant intactId="EBI-18076404">
        <id>O15529</id>
    </interactant>
    <interactant intactId="EBI-10294651">
        <id>Q99726</id>
        <label>SLC30A3</label>
    </interactant>
    <organismsDiffer>false</organismsDiffer>
    <experiments>3</experiments>
</comment>
<comment type="interaction">
    <interactant intactId="EBI-18076404">
        <id>O15529</id>
    </interactant>
    <interactant intactId="EBI-10262251">
        <id>Q8IWU4</id>
        <label>SLC30A8</label>
    </interactant>
    <organismsDiffer>false</organismsDiffer>
    <experiments>3</experiments>
</comment>
<comment type="interaction">
    <interactant intactId="EBI-18076404">
        <id>O15529</id>
    </interactant>
    <interactant intactId="EBI-12867720">
        <id>Q6ICL7</id>
        <label>SLC35E4</label>
    </interactant>
    <organismsDiffer>false</organismsDiffer>
    <experiments>3</experiments>
</comment>
<comment type="interaction">
    <interactant intactId="EBI-18076404">
        <id>O15529</id>
    </interactant>
    <interactant intactId="EBI-9978441">
        <id>Q9H2H9</id>
        <label>SLC38A1</label>
    </interactant>
    <organismsDiffer>false</organismsDiffer>
    <experiments>3</experiments>
</comment>
<comment type="interaction">
    <interactant intactId="EBI-18076404">
        <id>O15529</id>
    </interactant>
    <interactant intactId="EBI-10314552">
        <id>Q9NVC3</id>
        <label>SLC38A7</label>
    </interactant>
    <organismsDiffer>false</organismsDiffer>
    <experiments>3</experiments>
</comment>
<comment type="interaction">
    <interactant intactId="EBI-18076404">
        <id>O15529</id>
    </interactant>
    <interactant intactId="EBI-12898013">
        <id>Q9NP94</id>
        <label>SLC39A2</label>
    </interactant>
    <organismsDiffer>false</organismsDiffer>
    <experiments>3</experiments>
</comment>
<comment type="interaction">
    <interactant intactId="EBI-18076404">
        <id>O15529</id>
    </interactant>
    <interactant intactId="EBI-12266234">
        <id>Q8IVJ1</id>
        <label>SLC41A1</label>
    </interactant>
    <organismsDiffer>false</organismsDiffer>
    <experiments>3</experiments>
</comment>
<comment type="interaction">
    <interactant intactId="EBI-18076404">
        <id>O15529</id>
    </interactant>
    <interactant intactId="EBI-10290130">
        <id>Q96JW4</id>
        <label>SLC41A2</label>
    </interactant>
    <organismsDiffer>false</organismsDiffer>
    <experiments>3</experiments>
</comment>
<comment type="interaction">
    <interactant intactId="EBI-18076404">
        <id>O15529</id>
    </interactant>
    <interactant intactId="EBI-8640191">
        <id>Q9NRQ5</id>
        <label>SMCO4</label>
    </interactant>
    <organismsDiffer>false</organismsDiffer>
    <experiments>3</experiments>
</comment>
<comment type="interaction">
    <interactant intactId="EBI-18076404">
        <id>O15529</id>
    </interactant>
    <interactant intactId="EBI-741850">
        <id>Q9BZL3</id>
        <label>SMIM3</label>
    </interactant>
    <organismsDiffer>false</organismsDiffer>
    <experiments>3</experiments>
</comment>
<comment type="interaction">
    <interactant intactId="EBI-18076404">
        <id>O15529</id>
    </interactant>
    <interactant intactId="EBI-738687">
        <id>P02808</id>
        <label>STATH</label>
    </interactant>
    <organismsDiffer>false</organismsDiffer>
    <experiments>3</experiments>
</comment>
<comment type="interaction">
    <interactant intactId="EBI-18076404">
        <id>O15529</id>
    </interactant>
    <interactant intactId="EBI-12200293">
        <id>P0DN84</id>
        <label>STRIT1</label>
    </interactant>
    <organismsDiffer>false</organismsDiffer>
    <experiments>3</experiments>
</comment>
<comment type="interaction">
    <interactant intactId="EBI-18076404">
        <id>O15529</id>
    </interactant>
    <interactant intactId="EBI-727240">
        <id>Q9UNK0</id>
        <label>STX8</label>
    </interactant>
    <organismsDiffer>false</organismsDiffer>
    <experiments>3</experiments>
</comment>
<comment type="interaction">
    <interactant intactId="EBI-18076404">
        <id>O15529</id>
    </interactant>
    <interactant intactId="EBI-726331">
        <id>Q9H7V2</id>
        <label>SYNDIG1</label>
    </interactant>
    <organismsDiffer>false</organismsDiffer>
    <experiments>3</experiments>
</comment>
<comment type="interaction">
    <interactant intactId="EBI-18076404">
        <id>O15529</id>
    </interactant>
    <interactant intactId="EBI-12187159">
        <id>O43759-2</id>
        <label>SYNGR1</label>
    </interactant>
    <organismsDiffer>false</organismsDiffer>
    <experiments>3</experiments>
</comment>
<comment type="interaction">
    <interactant intactId="EBI-18076404">
        <id>O15529</id>
    </interactant>
    <interactant intactId="EBI-10329860">
        <id>Q9Y6I9</id>
        <label>TEX264</label>
    </interactant>
    <organismsDiffer>false</organismsDiffer>
    <experiments>3</experiments>
</comment>
<comment type="interaction">
    <interactant intactId="EBI-18076404">
        <id>O15529</id>
    </interactant>
    <interactant intactId="EBI-714319">
        <id>P02787</id>
        <label>TF</label>
    </interactant>
    <organismsDiffer>false</organismsDiffer>
    <experiments>3</experiments>
</comment>
<comment type="interaction">
    <interactant intactId="EBI-18076404">
        <id>O15529</id>
    </interactant>
    <interactant intactId="EBI-8650934">
        <id>P48230</id>
        <label>TM4SF4</label>
    </interactant>
    <organismsDiffer>false</organismsDiffer>
    <experiments>3</experiments>
</comment>
<comment type="interaction">
    <interactant intactId="EBI-18076404">
        <id>O15529</id>
    </interactant>
    <interactant intactId="EBI-1045825">
        <id>P55061</id>
        <label>TMBIM6</label>
    </interactant>
    <organismsDiffer>false</organismsDiffer>
    <experiments>3</experiments>
</comment>
<comment type="interaction">
    <interactant intactId="EBI-18076404">
        <id>O15529</id>
    </interactant>
    <interactant intactId="EBI-2844246">
        <id>Q9NV12</id>
        <label>TMEM140</label>
    </interactant>
    <organismsDiffer>false</organismsDiffer>
    <experiments>3</experiments>
</comment>
<comment type="interaction">
    <interactant intactId="EBI-18076404">
        <id>O15529</id>
    </interactant>
    <interactant intactId="EBI-348587">
        <id>Q9BVK8</id>
        <label>TMEM147</label>
    </interactant>
    <organismsDiffer>false</organismsDiffer>
    <experiments>3</experiments>
</comment>
<comment type="interaction">
    <interactant intactId="EBI-18076404">
        <id>O15529</id>
    </interactant>
    <interactant intactId="EBI-10255122">
        <id>Q6ZP80</id>
        <label>TMEM182</label>
    </interactant>
    <organismsDiffer>false</organismsDiffer>
    <experiments>3</experiments>
</comment>
<comment type="interaction">
    <interactant intactId="EBI-18076404">
        <id>O15529</id>
    </interactant>
    <interactant intactId="EBI-741829">
        <id>Q96HH6</id>
        <label>TMEM19</label>
    </interactant>
    <organismsDiffer>false</organismsDiffer>
    <experiments>3</experiments>
</comment>
<comment type="interaction">
    <interactant intactId="EBI-18076404">
        <id>O15529</id>
    </interactant>
    <interactant intactId="EBI-10982110">
        <id>Q96Q45-2</id>
        <label>TMEM237</label>
    </interactant>
    <organismsDiffer>false</organismsDiffer>
    <experiments>3</experiments>
</comment>
<comment type="interaction">
    <interactant intactId="EBI-18076404">
        <id>O15529</id>
    </interactant>
    <interactant intactId="EBI-11528917">
        <id>Q8WW34-2</id>
        <label>TMEM239</label>
    </interactant>
    <organismsDiffer>false</organismsDiffer>
    <experiments>3</experiments>
</comment>
<comment type="interaction">
    <interactant intactId="EBI-18076404">
        <id>O15529</id>
    </interactant>
    <interactant intactId="EBI-10315004">
        <id>Q9NWH2</id>
        <label>TMEM242</label>
    </interactant>
    <organismsDiffer>false</organismsDiffer>
    <experiments>3</experiments>
</comment>
<comment type="interaction">
    <interactant intactId="EBI-18076404">
        <id>O15529</id>
    </interactant>
    <interactant intactId="EBI-17180389">
        <id>E9PQX1</id>
        <label>TMEM262</label>
    </interactant>
    <organismsDiffer>false</organismsDiffer>
    <experiments>3</experiments>
</comment>
<comment type="interaction">
    <interactant intactId="EBI-18076404">
        <id>O15529</id>
    </interactant>
    <interactant intactId="EBI-9527107">
        <id>Q3MIR4</id>
        <label>TMEM30B</label>
    </interactant>
    <organismsDiffer>false</organismsDiffer>
    <experiments>3</experiments>
</comment>
<comment type="interaction">
    <interactant intactId="EBI-18076404">
        <id>O15529</id>
    </interactant>
    <interactant intactId="EBI-2852148">
        <id>Q9H2L4</id>
        <label>TMEM60</label>
    </interactant>
    <organismsDiffer>false</organismsDiffer>
    <experiments>3</experiments>
</comment>
<comment type="interaction">
    <interactant intactId="EBI-18076404">
        <id>O15529</id>
    </interactant>
    <interactant intactId="EBI-6656213">
        <id>Q6PI78</id>
        <label>TMEM65</label>
    </interactant>
    <organismsDiffer>false</organismsDiffer>
    <experiments>3</experiments>
</comment>
<comment type="interaction">
    <interactant intactId="EBI-18076404">
        <id>O15529</id>
    </interactant>
    <interactant intactId="EBI-16746122">
        <id>Q9NSU2-1</id>
        <label>TREX1</label>
    </interactant>
    <organismsDiffer>false</organismsDiffer>
    <experiments>3</experiments>
</comment>
<comment type="interaction">
    <interactant intactId="EBI-18076404">
        <id>O15529</id>
    </interactant>
    <interactant intactId="EBI-12195249">
        <id>Q5TGU0</id>
        <label>TSPO2</label>
    </interactant>
    <organismsDiffer>false</organismsDiffer>
    <experiments>3</experiments>
</comment>
<comment type="interaction">
    <interactant intactId="EBI-18076404">
        <id>O15529</id>
    </interactant>
    <interactant intactId="EBI-11988865">
        <id>A5PKU2</id>
        <label>TUSC5</label>
    </interactant>
    <organismsDiffer>false</organismsDiffer>
    <experiments>3</experiments>
</comment>
<comment type="interaction">
    <interactant intactId="EBI-18076404">
        <id>O15529</id>
    </interactant>
    <interactant intactId="EBI-2799703">
        <id>O95070</id>
        <label>YIF1A</label>
    </interactant>
    <organismsDiffer>false</organismsDiffer>
    <experiments>3</experiments>
</comment>
<comment type="interaction">
    <interactant intactId="EBI-18076404">
        <id>O15529</id>
    </interactant>
    <interactant intactId="EBI-7850136">
        <id>Q9Y548</id>
        <label>YIPF1</label>
    </interactant>
    <organismsDiffer>false</organismsDiffer>
    <experiments>3</experiments>
</comment>
<comment type="interaction">
    <interactant intactId="EBI-18076404">
        <id>O15529</id>
    </interactant>
    <interactant intactId="EBI-751204">
        <id>Q9BWQ6</id>
        <label>YIPF2</label>
    </interactant>
    <organismsDiffer>false</organismsDiffer>
    <experiments>3</experiments>
</comment>
<comment type="interaction">
    <interactant intactId="EBI-18076404">
        <id>O15529</id>
    </interactant>
    <interactant intactId="EBI-751253">
        <id>Q9BSR8</id>
        <label>YIPF4</label>
    </interactant>
    <organismsDiffer>false</organismsDiffer>
    <experiments>3</experiments>
</comment>
<comment type="interaction">
    <interactant intactId="EBI-18076404">
        <id>O15529</id>
    </interactant>
    <interactant intactId="EBI-751210">
        <id>Q96EC8</id>
        <label>YIPF6</label>
    </interactant>
    <organismsDiffer>false</organismsDiffer>
    <experiments>3</experiments>
</comment>
<comment type="interaction">
    <interactant intactId="EBI-18076404">
        <id>O15529</id>
    </interactant>
    <interactant intactId="EBI-718439">
        <id>O95159</id>
        <label>ZFPL1</label>
    </interactant>
    <organismsDiffer>false</organismsDiffer>
    <experiments>3</experiments>
</comment>
<comment type="subcellular location">
    <subcellularLocation>
        <location evidence="1">Cell membrane</location>
        <topology evidence="1">Multi-pass membrane protein</topology>
    </subcellularLocation>
</comment>
<comment type="polymorphism">
    <text evidence="7">The sequence shown in this entry differs from the translation of the reference genome assembly (GRCh38/hg38) due to a missense variant at position 174, p.Arg174Trp, in the reference genome, that results in the loss of response to short chain fatty acids, including propionate. The sequence shown in this entry is that of variant p.Trp174Arg. This variant is activated by propionate and has a frequency of about 15% in the human population according to the Genome Aggregation Database (gnomAD v2.1.1).</text>
</comment>
<comment type="similarity">
    <text evidence="3">Belongs to the G-protein coupled receptor 1 family.</text>
</comment>
<comment type="caution">
    <text evidence="8">The sequence shown in this entry differs from the translation of the reference genome assembly (GRCh38/hg38) due to a missense variant at position 174 in the reference genome, that results in the loss of response to short chain fatty acids, including propionate.</text>
</comment>
<reference key="1">
    <citation type="journal article" date="1997" name="Biochem. Biophys. Res. Commun.">
        <title>A cluster of four novel human G protein-coupled receptor genes occurring in close proximity to CD22 gene on chromosome 19q13.1.</title>
        <authorList>
            <person name="Sawzdargo M."/>
            <person name="George S.R."/>
            <person name="Nguyen T."/>
            <person name="Xu S."/>
            <person name="Kolakowski L.F. Jr."/>
            <person name="O'Dowd B.F."/>
        </authorList>
    </citation>
    <scope>NUCLEOTIDE SEQUENCE [GENOMIC DNA]</scope>
</reference>
<reference key="2">
    <citation type="journal article" date="2004" name="Nature">
        <title>The DNA sequence and biology of human chromosome 19.</title>
        <authorList>
            <person name="Grimwood J."/>
            <person name="Gordon L.A."/>
            <person name="Olsen A.S."/>
            <person name="Terry A."/>
            <person name="Schmutz J."/>
            <person name="Lamerdin J.E."/>
            <person name="Hellsten U."/>
            <person name="Goodstein D."/>
            <person name="Couronne O."/>
            <person name="Tran-Gyamfi M."/>
            <person name="Aerts A."/>
            <person name="Altherr M."/>
            <person name="Ashworth L."/>
            <person name="Bajorek E."/>
            <person name="Black S."/>
            <person name="Branscomb E."/>
            <person name="Caenepeel S."/>
            <person name="Carrano A.V."/>
            <person name="Caoile C."/>
            <person name="Chan Y.M."/>
            <person name="Christensen M."/>
            <person name="Cleland C.A."/>
            <person name="Copeland A."/>
            <person name="Dalin E."/>
            <person name="Dehal P."/>
            <person name="Denys M."/>
            <person name="Detter J.C."/>
            <person name="Escobar J."/>
            <person name="Flowers D."/>
            <person name="Fotopulos D."/>
            <person name="Garcia C."/>
            <person name="Georgescu A.M."/>
            <person name="Glavina T."/>
            <person name="Gomez M."/>
            <person name="Gonzales E."/>
            <person name="Groza M."/>
            <person name="Hammon N."/>
            <person name="Hawkins T."/>
            <person name="Haydu L."/>
            <person name="Ho I."/>
            <person name="Huang W."/>
            <person name="Israni S."/>
            <person name="Jett J."/>
            <person name="Kadner K."/>
            <person name="Kimball H."/>
            <person name="Kobayashi A."/>
            <person name="Larionov V."/>
            <person name="Leem S.-H."/>
            <person name="Lopez F."/>
            <person name="Lou Y."/>
            <person name="Lowry S."/>
            <person name="Malfatti S."/>
            <person name="Martinez D."/>
            <person name="McCready P.M."/>
            <person name="Medina C."/>
            <person name="Morgan J."/>
            <person name="Nelson K."/>
            <person name="Nolan M."/>
            <person name="Ovcharenko I."/>
            <person name="Pitluck S."/>
            <person name="Pollard M."/>
            <person name="Popkie A.P."/>
            <person name="Predki P."/>
            <person name="Quan G."/>
            <person name="Ramirez L."/>
            <person name="Rash S."/>
            <person name="Retterer J."/>
            <person name="Rodriguez A."/>
            <person name="Rogers S."/>
            <person name="Salamov A."/>
            <person name="Salazar A."/>
            <person name="She X."/>
            <person name="Smith D."/>
            <person name="Slezak T."/>
            <person name="Solovyev V."/>
            <person name="Thayer N."/>
            <person name="Tice H."/>
            <person name="Tsai M."/>
            <person name="Ustaszewska A."/>
            <person name="Vo N."/>
            <person name="Wagner M."/>
            <person name="Wheeler J."/>
            <person name="Wu K."/>
            <person name="Xie G."/>
            <person name="Yang J."/>
            <person name="Dubchak I."/>
            <person name="Furey T.S."/>
            <person name="DeJong P."/>
            <person name="Dickson M."/>
            <person name="Gordon D."/>
            <person name="Eichler E.E."/>
            <person name="Pennacchio L.A."/>
            <person name="Richardson P."/>
            <person name="Stubbs L."/>
            <person name="Rokhsar D.S."/>
            <person name="Myers R.M."/>
            <person name="Rubin E.M."/>
            <person name="Lucas S.M."/>
        </authorList>
    </citation>
    <scope>NUCLEOTIDE SEQUENCE [LARGE SCALE GENOMIC DNA]</scope>
    <scope>VARIANT TRP-174</scope>
</reference>
<reference key="3">
    <citation type="journal article" date="2003" name="J. Biol. Chem.">
        <title>The orphan G protein-coupled receptors GPR41 and GPR43 are activated by propionate and other short chain carboxylic acids.</title>
        <authorList>
            <person name="Brown A.J."/>
            <person name="Goldsworthy S.M."/>
            <person name="Barnes A.A."/>
            <person name="Eilert M.M."/>
            <person name="Tcheang L."/>
            <person name="Daniels D."/>
            <person name="Muir A.I."/>
            <person name="Wigglesworth M.J."/>
            <person name="Kinghorn I."/>
            <person name="Fraser N.J."/>
            <person name="Pike N.B."/>
            <person name="Strum J.C."/>
            <person name="Steplewski K.M."/>
            <person name="Murdock P.R."/>
            <person name="Holder J.C."/>
            <person name="Marshall F.H."/>
            <person name="Szekeres P.G."/>
            <person name="Wilson S."/>
            <person name="Ignar D.M."/>
            <person name="Foord S.M."/>
            <person name="Wise A."/>
            <person name="Dowell S.J."/>
        </authorList>
    </citation>
    <scope>CHARACTERIZATION OF VARIANT TPR-174</scope>
</reference>
<reference key="4">
    <citation type="journal article" date="2009" name="DNA Cell Biol.">
        <title>Sequence polymorphisms provide a common consensus sequence for GPR41 and GPR42.</title>
        <authorList>
            <person name="Liaw C.W."/>
            <person name="Connolly D.T."/>
        </authorList>
    </citation>
    <scope>VARIANTS GLN-44; ARG-45; TRP-174; LEU-227; ALA-256 AND SER-346</scope>
</reference>